<proteinExistence type="inferred from homology"/>
<organism>
    <name type="scientific">Takifugu rubripes</name>
    <name type="common">Japanese pufferfish</name>
    <name type="synonym">Fugu rubripes</name>
    <dbReference type="NCBI Taxonomy" id="31033"/>
    <lineage>
        <taxon>Eukaryota</taxon>
        <taxon>Metazoa</taxon>
        <taxon>Chordata</taxon>
        <taxon>Craniata</taxon>
        <taxon>Vertebrata</taxon>
        <taxon>Euteleostomi</taxon>
        <taxon>Actinopterygii</taxon>
        <taxon>Neopterygii</taxon>
        <taxon>Teleostei</taxon>
        <taxon>Neoteleostei</taxon>
        <taxon>Acanthomorphata</taxon>
        <taxon>Eupercaria</taxon>
        <taxon>Tetraodontiformes</taxon>
        <taxon>Tetradontoidea</taxon>
        <taxon>Tetraodontidae</taxon>
        <taxon>Takifugu</taxon>
    </lineage>
</organism>
<evidence type="ECO:0000250" key="1">
    <source>
        <dbReference type="UniProtKB" id="Q6DFJ8"/>
    </source>
</evidence>
<evidence type="ECO:0000250" key="2">
    <source>
        <dbReference type="UniProtKB" id="Q7TQ95"/>
    </source>
</evidence>
<evidence type="ECO:0000250" key="3">
    <source>
        <dbReference type="UniProtKB" id="Q9C0E8"/>
    </source>
</evidence>
<evidence type="ECO:0000255" key="4"/>
<evidence type="ECO:0000256" key="5">
    <source>
        <dbReference type="SAM" id="MobiDB-lite"/>
    </source>
</evidence>
<evidence type="ECO:0000305" key="6"/>
<sequence length="348" mass="38721">MSVFCLQAKPTTVEILEGIDKDIQILEDYSVKYQRQMKAVVGRLLLYSILLYLMAGVVVYSWYLPEQLMGRLVLGLPFLLFPLLVWILRKVLILFFARRTEKNNFKLEDLKAQKRKILEDVMETETYKNAKLILERFDPESKKKTDFDSTPVGPQMTPKPGQELRHRNVVPQTPPASVNSASGAAARPPLASGPAYPGRSSHSAPGGPPERNLLAIAAQQSLMRKFVTPGTPIPGVGLHPPGPPLARPVLPRERGVLDRLIEYLVGDGPQNRLALVCQQCLSHNGMALKEEFEYVAFRCAYCYFLNPARKTRPQAPRLPETAGEPKLPCDLNSSSCAAEEDKQSDSGD</sequence>
<comment type="function">
    <text evidence="2 3">Endoplasmic reticulum (ER)-shaping membrane protein that plays a role in determining ER morphology. Involved in the stabilization of nascent three-way ER tubular junctions within the ER network. May also play a role as a curvature-stabilizing protein within three-way ER tubular junction network (By similarity).</text>
</comment>
<comment type="subunit">
    <text evidence="1">Homodimer; homodimerization requires the C4-type zinc finger motif and decreases during mitosis in a phosphorylation-dependent manner.</text>
</comment>
<comment type="subcellular location">
    <subcellularLocation>
        <location evidence="3">Endoplasmic reticulum membrane</location>
        <topology evidence="3">Multi-pass membrane protein</topology>
        <orientation evidence="3">Cytoplasmic side</orientation>
    </subcellularLocation>
    <text evidence="3">Localizes at endoplasmic reticulum (ER) three-way tubular junctions, which represent crossing-points at which the tubules build a polygonal network.</text>
</comment>
<comment type="domain">
    <text evidence="3">The transmembrane domain 1 and 2 function as a signal-anchor and stop-transfer sequence, respectively, generating a double-spanning integral membrane protein with a N- and C-terminal cytoplasmic orientation. Transmembrane domain 1 and 2 are probably sufficient to mediate membrane translocation and topology formation in a N-myristoylation-independent manner. Transmembrane domain 2 is sufficient to block the protein secretion pathway. The two coiled-coil domains are necessary for its endoplasmic reticulum (ER) three-way tubular junction localization. The C4-type zinc finger motif is necessary both for its ER three-way tubular junction localization and formation.</text>
</comment>
<comment type="PTM">
    <text evidence="1">Phosphorylated. Phosphorylation occurs during interphase. Phosphorylation also occurs during mitosis; these phosphorylations reduce both its homodimerization and the ER three-way tubular junction formation.</text>
</comment>
<comment type="similarity">
    <text evidence="6">Belongs to the lunapark family.</text>
</comment>
<protein>
    <recommendedName>
        <fullName evidence="6">Endoplasmic reticulum junction formation protein lunapark-A</fullName>
    </recommendedName>
    <alternativeName>
        <fullName evidence="3">ER junction formation factor lunapark</fullName>
    </alternativeName>
</protein>
<name>LNPA_TAKRU</name>
<accession>Q1KKT4</accession>
<reference key="1">
    <citation type="journal article" date="2006" name="Proc. Natl. Acad. Sci. U.S.A.">
        <title>Highly conserved syntenic blocks at the vertebrate Hox loci and conserved regulatory elements within and outside Hox gene clusters.</title>
        <authorList>
            <person name="Lee A.P."/>
            <person name="Koh E.G.L."/>
            <person name="Tay A."/>
            <person name="Brenner S."/>
            <person name="Venkatesh B."/>
        </authorList>
    </citation>
    <scope>NUCLEOTIDE SEQUENCE [GENOMIC DNA]</scope>
</reference>
<feature type="chain" id="PRO_0000248315" description="Endoplasmic reticulum junction formation protein lunapark-A">
    <location>
        <begin position="1"/>
        <end position="348"/>
    </location>
</feature>
<feature type="topological domain" description="Cytoplasmic" evidence="3">
    <location>
        <begin position="1"/>
        <end position="43"/>
    </location>
</feature>
<feature type="transmembrane region" description="Helical" evidence="4">
    <location>
        <begin position="44"/>
        <end position="64"/>
    </location>
</feature>
<feature type="topological domain" description="Lumenal" evidence="3">
    <location>
        <begin position="65"/>
        <end position="67"/>
    </location>
</feature>
<feature type="transmembrane region" description="Helical" evidence="4">
    <location>
        <begin position="68"/>
        <end position="88"/>
    </location>
</feature>
<feature type="topological domain" description="Cytoplasmic" evidence="3">
    <location>
        <begin position="89"/>
        <end position="348"/>
    </location>
</feature>
<feature type="zinc finger region" description="C4-type; plays a role in ER morphology" evidence="3">
    <location>
        <begin position="277"/>
        <end position="302"/>
    </location>
</feature>
<feature type="region of interest" description="Disordered" evidence="5">
    <location>
        <begin position="142"/>
        <end position="211"/>
    </location>
</feature>
<feature type="region of interest" description="Disordered" evidence="5">
    <location>
        <begin position="313"/>
        <end position="348"/>
    </location>
</feature>
<feature type="coiled-coil region" evidence="4">
    <location>
        <begin position="105"/>
        <end position="126"/>
    </location>
</feature>
<feature type="compositionally biased region" description="Basic and acidic residues" evidence="5">
    <location>
        <begin position="339"/>
        <end position="348"/>
    </location>
</feature>
<gene>
    <name type="primary">lnpka</name>
    <name type="synonym">lnpa</name>
</gene>
<keyword id="KW-0175">Coiled coil</keyword>
<keyword id="KW-0256">Endoplasmic reticulum</keyword>
<keyword id="KW-0472">Membrane</keyword>
<keyword id="KW-0479">Metal-binding</keyword>
<keyword id="KW-1185">Reference proteome</keyword>
<keyword id="KW-0812">Transmembrane</keyword>
<keyword id="KW-1133">Transmembrane helix</keyword>
<keyword id="KW-0862">Zinc</keyword>
<keyword id="KW-0863">Zinc-finger</keyword>
<dbReference type="EMBL" id="DQ481668">
    <property type="protein sequence ID" value="ABF22460.1"/>
    <property type="molecule type" value="Genomic_DNA"/>
</dbReference>
<dbReference type="STRING" id="31033.ENSTRUP00000044963"/>
<dbReference type="eggNOG" id="KOG2846">
    <property type="taxonomic scope" value="Eukaryota"/>
</dbReference>
<dbReference type="InParanoid" id="Q1KKT4"/>
<dbReference type="Proteomes" id="UP000005226">
    <property type="component" value="Unplaced"/>
</dbReference>
<dbReference type="GO" id="GO:0005789">
    <property type="term" value="C:endoplasmic reticulum membrane"/>
    <property type="evidence" value="ECO:0000250"/>
    <property type="project" value="UniProtKB"/>
</dbReference>
<dbReference type="GO" id="GO:0098826">
    <property type="term" value="C:endoplasmic reticulum tubular network membrane"/>
    <property type="evidence" value="ECO:0000250"/>
    <property type="project" value="UniProtKB"/>
</dbReference>
<dbReference type="GO" id="GO:0042802">
    <property type="term" value="F:identical protein binding"/>
    <property type="evidence" value="ECO:0000250"/>
    <property type="project" value="UniProtKB"/>
</dbReference>
<dbReference type="GO" id="GO:0008270">
    <property type="term" value="F:zinc ion binding"/>
    <property type="evidence" value="ECO:0007669"/>
    <property type="project" value="UniProtKB-KW"/>
</dbReference>
<dbReference type="GO" id="GO:0071788">
    <property type="term" value="P:endoplasmic reticulum tubular network maintenance"/>
    <property type="evidence" value="ECO:0000250"/>
    <property type="project" value="UniProtKB"/>
</dbReference>
<dbReference type="GO" id="GO:1903373">
    <property type="term" value="P:positive regulation of endoplasmic reticulum tubular network organization"/>
    <property type="evidence" value="ECO:0000250"/>
    <property type="project" value="UniProtKB"/>
</dbReference>
<dbReference type="InterPro" id="IPR040115">
    <property type="entry name" value="Lnp"/>
</dbReference>
<dbReference type="InterPro" id="IPR019273">
    <property type="entry name" value="Lunapark_Znf"/>
</dbReference>
<dbReference type="PANTHER" id="PTHR22166">
    <property type="entry name" value="ENDOPLASMIC RETICULUM JUNCTION FORMATION PROTEIN LUNAPARK"/>
    <property type="match status" value="1"/>
</dbReference>
<dbReference type="PANTHER" id="PTHR22166:SF13">
    <property type="entry name" value="ENDOPLASMIC RETICULUM JUNCTION FORMATION PROTEIN LUNAPARK-A"/>
    <property type="match status" value="1"/>
</dbReference>
<dbReference type="Pfam" id="PF10058">
    <property type="entry name" value="Zn_ribbon_10"/>
    <property type="match status" value="1"/>
</dbReference>